<reference evidence="9" key="1">
    <citation type="journal article" date="1994" name="J. Mol. Biol.">
        <title>Characterization of a Plasmodium vivax cysteine proteinase gene identifies uniquely conserved amino acids that may mediate the substrate specificity of malarial hemoglobinases.</title>
        <authorList>
            <person name="Rosenthal P.J."/>
            <person name="Ring C.S."/>
            <person name="Chen X."/>
            <person name="Cohen F.E."/>
        </authorList>
    </citation>
    <scope>NUCLEOTIDE SEQUENCE [MRNA]</scope>
    <source>
        <strain evidence="9">Salvador I</strain>
    </source>
</reference>
<reference evidence="11" key="2">
    <citation type="journal article" date="2008" name="Nature">
        <title>Comparative genomics of the neglected human malaria parasite Plasmodium vivax.</title>
        <authorList>
            <person name="Carlton J.M."/>
            <person name="Adams J.H."/>
            <person name="Silva J.C."/>
            <person name="Bidwell S.L."/>
            <person name="Lorenzi H."/>
            <person name="Caler E."/>
            <person name="Crabtree J."/>
            <person name="Angiuoli S.V."/>
            <person name="Merino E.F."/>
            <person name="Amedeo P."/>
            <person name="Cheng Q."/>
            <person name="Coulson R.M.R."/>
            <person name="Crabb B.S."/>
            <person name="del Portillo H.A."/>
            <person name="Essien K."/>
            <person name="Feldblyum T.V."/>
            <person name="Fernandez-Becerra C."/>
            <person name="Gilson P.R."/>
            <person name="Gueye A.H."/>
            <person name="Guo X."/>
            <person name="Kang'a S."/>
            <person name="Kooij T.W.A."/>
            <person name="Korsinczky M."/>
            <person name="Meyer E.V.-S."/>
            <person name="Nene V."/>
            <person name="Paulsen I."/>
            <person name="White O."/>
            <person name="Ralph S.A."/>
            <person name="Ren Q."/>
            <person name="Sargeant T.J."/>
            <person name="Salzberg S.L."/>
            <person name="Stoeckert C.J."/>
            <person name="Sullivan S.A."/>
            <person name="Yamamoto M.M."/>
            <person name="Hoffman S.L."/>
            <person name="Wortman J.R."/>
            <person name="Gardner M.J."/>
            <person name="Galinski M.R."/>
            <person name="Barnwell J.W."/>
            <person name="Fraser-Liggett C.M."/>
        </authorList>
    </citation>
    <scope>NUCLEOTIDE SEQUENCE [LARGE SCALE GENOMIC DNA]</scope>
    <source>
        <strain evidence="11">Salvador I</strain>
    </source>
</reference>
<sequence>MAQDIKIMNLTKSSLEALNRNQMLSKKSSRKILKICMYAILTFAMCGVVLICLTAMSNSDGSLTQSGSHNQSGSLKGLSSTPGDGEILNKAEIETLRFIFSNYPHGNRDPTGDDVEKPADAALPNEEDQKVKIADAGKHIKLMKQYNEIVADMSEDNKEQLAKMLRELLKKKINERKKKREDPNGNNEEGKEVINISVPSFNYKRVSANQDDSDDEEEVSVAQIEGLFVNLKYASKFFNFMNKYKRSYKDINEQMEKYKNFKMNYLKIKKHNETNQMYKMKVNQFSDYSKKDFESYFRKLLPIPDHLKKKYVVPFSSMNNGKGKNVVTSSSGANLLADVPEILDYREKGIVHEPKDQGLCGSCWAFASVGNVECMYAKEHNKTILTLSEQEVVDCSKLNFGCDGGHPFYSFIYAIENGICMGDDYKYKAMDNLFCLNYRCKNKVTLSSVGGVKENELIRALNEVGPVSVNVGVTDDFSFYGGGIFNGTCTEELNHSVLLVGYGQVQSSKIFQEKNAYDDASGVTKKGALSYPSKADDGIQYYWIIKNSWSKFWGENGFMRISRNKEGDNVFCGIGVEVFYPIL</sequence>
<name>VX1_PLAVS</name>
<dbReference type="EC" id="3.4.22.-" evidence="1"/>
<dbReference type="EMBL" id="L26362">
    <property type="protein sequence ID" value="AAA60368.1"/>
    <property type="molecule type" value="mRNA"/>
</dbReference>
<dbReference type="EMBL" id="AAKM01000004">
    <property type="protein sequence ID" value="EDL46080.1"/>
    <property type="molecule type" value="Genomic_DNA"/>
</dbReference>
<dbReference type="PIR" id="S46265">
    <property type="entry name" value="S46265"/>
</dbReference>
<dbReference type="RefSeq" id="XP_001615807.1">
    <property type="nucleotide sequence ID" value="XM_001615757.1"/>
</dbReference>
<dbReference type="SMR" id="P42666"/>
<dbReference type="STRING" id="126793.P42666"/>
<dbReference type="EnsemblProtists" id="EDL46080">
    <property type="protein sequence ID" value="EDL46080"/>
    <property type="gene ID" value="PVX_117565"/>
</dbReference>
<dbReference type="GeneID" id="5475105"/>
<dbReference type="KEGG" id="pvx:PVX_117565"/>
<dbReference type="VEuPathDB" id="PlasmoDB:PVX_117565"/>
<dbReference type="InParanoid" id="A5K3H6"/>
<dbReference type="OMA" id="AQNMSIM"/>
<dbReference type="Proteomes" id="UP000008333">
    <property type="component" value="Chromosome 12"/>
</dbReference>
<dbReference type="GO" id="GO:0016020">
    <property type="term" value="C:membrane"/>
    <property type="evidence" value="ECO:0007669"/>
    <property type="project" value="UniProtKB-SubCell"/>
</dbReference>
<dbReference type="GO" id="GO:0008234">
    <property type="term" value="F:cysteine-type peptidase activity"/>
    <property type="evidence" value="ECO:0007669"/>
    <property type="project" value="UniProtKB-KW"/>
</dbReference>
<dbReference type="GO" id="GO:0006508">
    <property type="term" value="P:proteolysis"/>
    <property type="evidence" value="ECO:0007669"/>
    <property type="project" value="UniProtKB-KW"/>
</dbReference>
<dbReference type="CDD" id="cd02248">
    <property type="entry name" value="Peptidase_C1A"/>
    <property type="match status" value="1"/>
</dbReference>
<dbReference type="Gene3D" id="3.90.70.10">
    <property type="entry name" value="Cysteine proteinases"/>
    <property type="match status" value="1"/>
</dbReference>
<dbReference type="InterPro" id="IPR038765">
    <property type="entry name" value="Papain-like_cys_pep_sf"/>
</dbReference>
<dbReference type="InterPro" id="IPR025661">
    <property type="entry name" value="Pept_asp_AS"/>
</dbReference>
<dbReference type="InterPro" id="IPR000169">
    <property type="entry name" value="Pept_cys_AS"/>
</dbReference>
<dbReference type="InterPro" id="IPR025660">
    <property type="entry name" value="Pept_his_AS"/>
</dbReference>
<dbReference type="InterPro" id="IPR013128">
    <property type="entry name" value="Peptidase_C1A"/>
</dbReference>
<dbReference type="InterPro" id="IPR000668">
    <property type="entry name" value="Peptidase_C1A_C"/>
</dbReference>
<dbReference type="InterPro" id="IPR039417">
    <property type="entry name" value="Peptidase_C1A_papain-like"/>
</dbReference>
<dbReference type="InterPro" id="IPR013201">
    <property type="entry name" value="Prot_inhib_I29"/>
</dbReference>
<dbReference type="PANTHER" id="PTHR12411">
    <property type="entry name" value="CYSTEINE PROTEASE FAMILY C1-RELATED"/>
    <property type="match status" value="1"/>
</dbReference>
<dbReference type="Pfam" id="PF08246">
    <property type="entry name" value="Inhibitor_I29"/>
    <property type="match status" value="1"/>
</dbReference>
<dbReference type="Pfam" id="PF00112">
    <property type="entry name" value="Peptidase_C1"/>
    <property type="match status" value="1"/>
</dbReference>
<dbReference type="PRINTS" id="PR00705">
    <property type="entry name" value="PAPAIN"/>
</dbReference>
<dbReference type="SMART" id="SM00848">
    <property type="entry name" value="Inhibitor_I29"/>
    <property type="match status" value="1"/>
</dbReference>
<dbReference type="SMART" id="SM00645">
    <property type="entry name" value="Pept_C1"/>
    <property type="match status" value="1"/>
</dbReference>
<dbReference type="SUPFAM" id="SSF54001">
    <property type="entry name" value="Cysteine proteinases"/>
    <property type="match status" value="1"/>
</dbReference>
<dbReference type="PROSITE" id="PS00640">
    <property type="entry name" value="THIOL_PROTEASE_ASN"/>
    <property type="match status" value="1"/>
</dbReference>
<dbReference type="PROSITE" id="PS00139">
    <property type="entry name" value="THIOL_PROTEASE_CYS"/>
    <property type="match status" value="1"/>
</dbReference>
<dbReference type="PROSITE" id="PS00639">
    <property type="entry name" value="THIOL_PROTEASE_HIS"/>
    <property type="match status" value="1"/>
</dbReference>
<evidence type="ECO:0000250" key="1">
    <source>
        <dbReference type="UniProtKB" id="P25805"/>
    </source>
</evidence>
<evidence type="ECO:0000250" key="2">
    <source>
        <dbReference type="UniProtKB" id="Q8I6U4"/>
    </source>
</evidence>
<evidence type="ECO:0000255" key="3"/>
<evidence type="ECO:0000255" key="4">
    <source>
        <dbReference type="PROSITE-ProRule" id="PRU10088"/>
    </source>
</evidence>
<evidence type="ECO:0000255" key="5">
    <source>
        <dbReference type="PROSITE-ProRule" id="PRU10089"/>
    </source>
</evidence>
<evidence type="ECO:0000255" key="6">
    <source>
        <dbReference type="PROSITE-ProRule" id="PRU10090"/>
    </source>
</evidence>
<evidence type="ECO:0000256" key="7">
    <source>
        <dbReference type="SAM" id="MobiDB-lite"/>
    </source>
</evidence>
<evidence type="ECO:0000305" key="8"/>
<evidence type="ECO:0000312" key="9">
    <source>
        <dbReference type="EMBL" id="AAA60368.1"/>
    </source>
</evidence>
<evidence type="ECO:0000312" key="10">
    <source>
        <dbReference type="EMBL" id="EDL46080.1"/>
    </source>
</evidence>
<evidence type="ECO:0000312" key="11">
    <source>
        <dbReference type="Proteomes" id="UP000008333"/>
    </source>
</evidence>
<organism evidence="11">
    <name type="scientific">Plasmodium vivax (strain Salvador I)</name>
    <dbReference type="NCBI Taxonomy" id="126793"/>
    <lineage>
        <taxon>Eukaryota</taxon>
        <taxon>Sar</taxon>
        <taxon>Alveolata</taxon>
        <taxon>Apicomplexa</taxon>
        <taxon>Aconoidasida</taxon>
        <taxon>Haemosporida</taxon>
        <taxon>Plasmodiidae</taxon>
        <taxon>Plasmodium</taxon>
        <taxon>Plasmodium (Plasmodium)</taxon>
    </lineage>
</organism>
<protein>
    <recommendedName>
        <fullName evidence="8">Vivapain-1</fullName>
        <ecNumber evidence="1">3.4.22.-</ecNumber>
    </recommendedName>
    <alternativeName>
        <fullName evidence="8">Cysteine proteinase vivapain-1</fullName>
    </alternativeName>
</protein>
<feature type="propeptide" id="PRO_0000026477" description="Activation peptide" evidence="3">
    <location>
        <begin position="1"/>
        <end position="338"/>
    </location>
</feature>
<feature type="chain" id="PRO_0000026478" description="Vivapain-1">
    <location>
        <begin position="339"/>
        <end position="583"/>
    </location>
</feature>
<feature type="topological domain" description="Cytoplasmic" evidence="8">
    <location>
        <begin position="1"/>
        <end position="34"/>
    </location>
</feature>
<feature type="transmembrane region" description="Helical; Signal-anchor for type II membrane protein" evidence="3">
    <location>
        <begin position="35"/>
        <end position="55"/>
    </location>
</feature>
<feature type="topological domain" description="Lumenal" evidence="8">
    <location>
        <begin position="56"/>
        <end position="583"/>
    </location>
</feature>
<feature type="region of interest" description="Disordered" evidence="7">
    <location>
        <begin position="62"/>
        <end position="83"/>
    </location>
</feature>
<feature type="region of interest" description="Disordered" evidence="7">
    <location>
        <begin position="104"/>
        <end position="125"/>
    </location>
</feature>
<feature type="compositionally biased region" description="Polar residues" evidence="7">
    <location>
        <begin position="62"/>
        <end position="82"/>
    </location>
</feature>
<feature type="compositionally biased region" description="Basic and acidic residues" evidence="7">
    <location>
        <begin position="106"/>
        <end position="119"/>
    </location>
</feature>
<feature type="active site" evidence="4">
    <location>
        <position position="363"/>
    </location>
</feature>
<feature type="active site" evidence="5">
    <location>
        <position position="495"/>
    </location>
</feature>
<feature type="active site" evidence="6">
    <location>
        <position position="547"/>
    </location>
</feature>
<feature type="glycosylation site" description="N-linked (GlcNAc...) asparagine" evidence="3">
    <location>
        <position position="70"/>
    </location>
</feature>
<feature type="glycosylation site" description="N-linked (GlcNAc...) asparagine" evidence="3">
    <location>
        <position position="195"/>
    </location>
</feature>
<feature type="glycosylation site" description="N-linked (GlcNAc...) asparagine" evidence="3">
    <location>
        <position position="272"/>
    </location>
</feature>
<feature type="glycosylation site" description="N-linked (GlcNAc...) asparagine" evidence="3">
    <location>
        <position position="381"/>
    </location>
</feature>
<feature type="glycosylation site" description="N-linked (GlcNAc...) asparagine" evidence="3">
    <location>
        <position position="486"/>
    </location>
</feature>
<feature type="glycosylation site" description="N-linked (GlcNAc...) asparagine" evidence="3">
    <location>
        <position position="494"/>
    </location>
</feature>
<feature type="disulfide bond" evidence="2">
    <location>
        <begin position="360"/>
        <end position="402"/>
    </location>
</feature>
<feature type="disulfide bond" evidence="2">
    <location>
        <begin position="395"/>
        <end position="435"/>
    </location>
</feature>
<feature type="disulfide bond" evidence="2">
    <location>
        <begin position="420"/>
        <end position="440"/>
    </location>
</feature>
<feature type="disulfide bond" evidence="2">
    <location>
        <begin position="489"/>
        <end position="572"/>
    </location>
</feature>
<feature type="sequence conflict" description="In Ref. 1; AAA60368." evidence="8" ref="1">
    <original>L</original>
    <variation>V</variation>
    <location>
        <position position="301"/>
    </location>
</feature>
<comment type="function">
    <text evidence="1">Cysteine protease.</text>
</comment>
<comment type="subcellular location">
    <subcellularLocation>
        <location evidence="3">Membrane</location>
        <topology evidence="8">Single-pass type II membrane protein</topology>
    </subcellularLocation>
</comment>
<comment type="similarity">
    <text evidence="4">Belongs to the peptidase C1 family.</text>
</comment>
<accession>P42666</accession>
<accession>A5K3H6</accession>
<gene>
    <name evidence="8" type="primary">VX1</name>
    <name evidence="8" type="synonym">VX-1</name>
    <name evidence="10" type="ORF">PVX_117565</name>
</gene>
<keyword id="KW-1015">Disulfide bond</keyword>
<keyword id="KW-0325">Glycoprotein</keyword>
<keyword id="KW-0378">Hydrolase</keyword>
<keyword id="KW-0472">Membrane</keyword>
<keyword id="KW-0645">Protease</keyword>
<keyword id="KW-1185">Reference proteome</keyword>
<keyword id="KW-0735">Signal-anchor</keyword>
<keyword id="KW-0788">Thiol protease</keyword>
<keyword id="KW-0812">Transmembrane</keyword>
<keyword id="KW-1133">Transmembrane helix</keyword>
<keyword id="KW-0865">Zymogen</keyword>
<proteinExistence type="evidence at transcript level"/>